<comment type="function">
    <text evidence="1">Catalyzes the conversion of dethiobiotin (DTB) to biotin by the insertion of a sulfur atom into dethiobiotin via a radical-based mechanism.</text>
</comment>
<comment type="catalytic activity">
    <reaction evidence="1">
        <text>(4R,5S)-dethiobiotin + (sulfur carrier)-SH + 2 reduced [2Fe-2S]-[ferredoxin] + 2 S-adenosyl-L-methionine = (sulfur carrier)-H + biotin + 2 5'-deoxyadenosine + 2 L-methionine + 2 oxidized [2Fe-2S]-[ferredoxin]</text>
        <dbReference type="Rhea" id="RHEA:22060"/>
        <dbReference type="Rhea" id="RHEA-COMP:10000"/>
        <dbReference type="Rhea" id="RHEA-COMP:10001"/>
        <dbReference type="Rhea" id="RHEA-COMP:14737"/>
        <dbReference type="Rhea" id="RHEA-COMP:14739"/>
        <dbReference type="ChEBI" id="CHEBI:17319"/>
        <dbReference type="ChEBI" id="CHEBI:29917"/>
        <dbReference type="ChEBI" id="CHEBI:33737"/>
        <dbReference type="ChEBI" id="CHEBI:33738"/>
        <dbReference type="ChEBI" id="CHEBI:57586"/>
        <dbReference type="ChEBI" id="CHEBI:57844"/>
        <dbReference type="ChEBI" id="CHEBI:59789"/>
        <dbReference type="ChEBI" id="CHEBI:64428"/>
        <dbReference type="ChEBI" id="CHEBI:149473"/>
        <dbReference type="EC" id="2.8.1.6"/>
    </reaction>
</comment>
<comment type="cofactor">
    <cofactor evidence="1">
        <name>[4Fe-4S] cluster</name>
        <dbReference type="ChEBI" id="CHEBI:49883"/>
    </cofactor>
    <text evidence="1">Binds 1 [4Fe-4S] cluster. The cluster is coordinated with 3 cysteines and an exchangeable S-adenosyl-L-methionine.</text>
</comment>
<comment type="cofactor">
    <cofactor evidence="1">
        <name>[2Fe-2S] cluster</name>
        <dbReference type="ChEBI" id="CHEBI:190135"/>
    </cofactor>
    <text evidence="1">Binds 1 [2Fe-2S] cluster. The cluster is coordinated with 3 cysteines and 1 arginine.</text>
</comment>
<comment type="pathway">
    <text evidence="1">Cofactor biosynthesis; biotin biosynthesis; biotin from 7,8-diaminononanoate: step 2/2.</text>
</comment>
<comment type="subunit">
    <text evidence="1">Homodimer.</text>
</comment>
<comment type="similarity">
    <text evidence="1">Belongs to the radical SAM superfamily. Biotin synthase family.</text>
</comment>
<name>BIOB_THET8</name>
<sequence length="329" mass="36388">MAWPDLDPPRLAERPLSLQEALFVLEAPPEALPALAEAAIRVKEYFFGRRLKLVRLLNVKSGFCPEDCAYCAQSARSQAAIARYPLLSLEEILERAEEAQRLSARRFCLVAALRGPTPKVLERLGEAAQAIKARFPLELCASLGLLEEGMAEALKAAGFDYYNHNLNTAPSLYPRIATTHTYQDRLWTLKRAREAGLKLCSGVILGMGEGPKEVYEMALALRELGVESLPVNFLLPIPGTPLGDGRTVAGLTPERALKALILFRLLNPKAELRASAGRERYLGPYEPLAFRMVNSIFLQGYLTQPGSPWERDRALWESLDLDVEEGACG</sequence>
<keyword id="KW-0001">2Fe-2S</keyword>
<keyword id="KW-0004">4Fe-4S</keyword>
<keyword id="KW-0093">Biotin biosynthesis</keyword>
<keyword id="KW-0408">Iron</keyword>
<keyword id="KW-0411">Iron-sulfur</keyword>
<keyword id="KW-0479">Metal-binding</keyword>
<keyword id="KW-1185">Reference proteome</keyword>
<keyword id="KW-0949">S-adenosyl-L-methionine</keyword>
<keyword id="KW-0808">Transferase</keyword>
<dbReference type="EC" id="2.8.1.6" evidence="1"/>
<dbReference type="EMBL" id="AP008226">
    <property type="protein sequence ID" value="BAD70430.1"/>
    <property type="molecule type" value="Genomic_DNA"/>
</dbReference>
<dbReference type="RefSeq" id="WP_011228065.1">
    <property type="nucleotide sequence ID" value="NC_006461.1"/>
</dbReference>
<dbReference type="RefSeq" id="YP_143873.1">
    <property type="nucleotide sequence ID" value="NC_006461.1"/>
</dbReference>
<dbReference type="SMR" id="Q5SKN6"/>
<dbReference type="EnsemblBacteria" id="BAD70430">
    <property type="protein sequence ID" value="BAD70430"/>
    <property type="gene ID" value="BAD70430"/>
</dbReference>
<dbReference type="GeneID" id="3169204"/>
<dbReference type="KEGG" id="ttj:TTHA0607"/>
<dbReference type="PATRIC" id="fig|300852.9.peg.605"/>
<dbReference type="eggNOG" id="COG0502">
    <property type="taxonomic scope" value="Bacteria"/>
</dbReference>
<dbReference type="HOGENOM" id="CLU_033172_2_1_0"/>
<dbReference type="PhylomeDB" id="Q5SKN6"/>
<dbReference type="UniPathway" id="UPA00078">
    <property type="reaction ID" value="UER00162"/>
</dbReference>
<dbReference type="Proteomes" id="UP000000532">
    <property type="component" value="Chromosome"/>
</dbReference>
<dbReference type="GO" id="GO:0051537">
    <property type="term" value="F:2 iron, 2 sulfur cluster binding"/>
    <property type="evidence" value="ECO:0007669"/>
    <property type="project" value="UniProtKB-KW"/>
</dbReference>
<dbReference type="GO" id="GO:0051539">
    <property type="term" value="F:4 iron, 4 sulfur cluster binding"/>
    <property type="evidence" value="ECO:0007669"/>
    <property type="project" value="UniProtKB-KW"/>
</dbReference>
<dbReference type="GO" id="GO:0004076">
    <property type="term" value="F:biotin synthase activity"/>
    <property type="evidence" value="ECO:0007669"/>
    <property type="project" value="UniProtKB-UniRule"/>
</dbReference>
<dbReference type="GO" id="GO:0005506">
    <property type="term" value="F:iron ion binding"/>
    <property type="evidence" value="ECO:0007669"/>
    <property type="project" value="UniProtKB-UniRule"/>
</dbReference>
<dbReference type="GO" id="GO:0009102">
    <property type="term" value="P:biotin biosynthetic process"/>
    <property type="evidence" value="ECO:0007669"/>
    <property type="project" value="UniProtKB-UniRule"/>
</dbReference>
<dbReference type="CDD" id="cd01335">
    <property type="entry name" value="Radical_SAM"/>
    <property type="match status" value="1"/>
</dbReference>
<dbReference type="Gene3D" id="3.20.20.70">
    <property type="entry name" value="Aldolase class I"/>
    <property type="match status" value="1"/>
</dbReference>
<dbReference type="HAMAP" id="MF_01694">
    <property type="entry name" value="BioB"/>
    <property type="match status" value="1"/>
</dbReference>
<dbReference type="InterPro" id="IPR013785">
    <property type="entry name" value="Aldolase_TIM"/>
</dbReference>
<dbReference type="InterPro" id="IPR010722">
    <property type="entry name" value="BATS_dom"/>
</dbReference>
<dbReference type="InterPro" id="IPR002684">
    <property type="entry name" value="Biotin_synth/BioAB"/>
</dbReference>
<dbReference type="InterPro" id="IPR024177">
    <property type="entry name" value="Biotin_synthase"/>
</dbReference>
<dbReference type="InterPro" id="IPR006638">
    <property type="entry name" value="Elp3/MiaA/NifB-like_rSAM"/>
</dbReference>
<dbReference type="InterPro" id="IPR007197">
    <property type="entry name" value="rSAM"/>
</dbReference>
<dbReference type="NCBIfam" id="TIGR00433">
    <property type="entry name" value="bioB"/>
    <property type="match status" value="1"/>
</dbReference>
<dbReference type="PANTHER" id="PTHR22976">
    <property type="entry name" value="BIOTIN SYNTHASE"/>
    <property type="match status" value="1"/>
</dbReference>
<dbReference type="PANTHER" id="PTHR22976:SF2">
    <property type="entry name" value="BIOTIN SYNTHASE, MITOCHONDRIAL"/>
    <property type="match status" value="1"/>
</dbReference>
<dbReference type="Pfam" id="PF06968">
    <property type="entry name" value="BATS"/>
    <property type="match status" value="1"/>
</dbReference>
<dbReference type="Pfam" id="PF04055">
    <property type="entry name" value="Radical_SAM"/>
    <property type="match status" value="1"/>
</dbReference>
<dbReference type="PIRSF" id="PIRSF001619">
    <property type="entry name" value="Biotin_synth"/>
    <property type="match status" value="1"/>
</dbReference>
<dbReference type="SFLD" id="SFLDG01060">
    <property type="entry name" value="BATS_domain_containing"/>
    <property type="match status" value="1"/>
</dbReference>
<dbReference type="SFLD" id="SFLDG01278">
    <property type="entry name" value="biotin_synthase_like"/>
    <property type="match status" value="1"/>
</dbReference>
<dbReference type="SMART" id="SM00876">
    <property type="entry name" value="BATS"/>
    <property type="match status" value="1"/>
</dbReference>
<dbReference type="SMART" id="SM00729">
    <property type="entry name" value="Elp3"/>
    <property type="match status" value="1"/>
</dbReference>
<dbReference type="SUPFAM" id="SSF102114">
    <property type="entry name" value="Radical SAM enzymes"/>
    <property type="match status" value="1"/>
</dbReference>
<dbReference type="PROSITE" id="PS51918">
    <property type="entry name" value="RADICAL_SAM"/>
    <property type="match status" value="1"/>
</dbReference>
<protein>
    <recommendedName>
        <fullName evidence="1">Biotin synthase</fullName>
        <ecNumber evidence="1">2.8.1.6</ecNumber>
    </recommendedName>
</protein>
<feature type="chain" id="PRO_0000381687" description="Biotin synthase">
    <location>
        <begin position="1"/>
        <end position="329"/>
    </location>
</feature>
<feature type="domain" description="Radical SAM core" evidence="2">
    <location>
        <begin position="46"/>
        <end position="275"/>
    </location>
</feature>
<feature type="binding site" evidence="1">
    <location>
        <position position="64"/>
    </location>
    <ligand>
        <name>[4Fe-4S] cluster</name>
        <dbReference type="ChEBI" id="CHEBI:49883"/>
        <note>4Fe-4S-S-AdoMet</note>
    </ligand>
</feature>
<feature type="binding site" evidence="1">
    <location>
        <position position="68"/>
    </location>
    <ligand>
        <name>[4Fe-4S] cluster</name>
        <dbReference type="ChEBI" id="CHEBI:49883"/>
        <note>4Fe-4S-S-AdoMet</note>
    </ligand>
</feature>
<feature type="binding site" evidence="1">
    <location>
        <position position="71"/>
    </location>
    <ligand>
        <name>[4Fe-4S] cluster</name>
        <dbReference type="ChEBI" id="CHEBI:49883"/>
        <note>4Fe-4S-S-AdoMet</note>
    </ligand>
</feature>
<feature type="binding site" evidence="1">
    <location>
        <position position="108"/>
    </location>
    <ligand>
        <name>[2Fe-2S] cluster</name>
        <dbReference type="ChEBI" id="CHEBI:190135"/>
    </ligand>
</feature>
<feature type="binding site" evidence="1">
    <location>
        <position position="140"/>
    </location>
    <ligand>
        <name>[2Fe-2S] cluster</name>
        <dbReference type="ChEBI" id="CHEBI:190135"/>
    </ligand>
</feature>
<feature type="binding site" evidence="1">
    <location>
        <position position="200"/>
    </location>
    <ligand>
        <name>[2Fe-2S] cluster</name>
        <dbReference type="ChEBI" id="CHEBI:190135"/>
    </ligand>
</feature>
<feature type="binding site" evidence="1">
    <location>
        <position position="273"/>
    </location>
    <ligand>
        <name>[2Fe-2S] cluster</name>
        <dbReference type="ChEBI" id="CHEBI:190135"/>
    </ligand>
</feature>
<organism>
    <name type="scientific">Thermus thermophilus (strain ATCC 27634 / DSM 579 / HB8)</name>
    <dbReference type="NCBI Taxonomy" id="300852"/>
    <lineage>
        <taxon>Bacteria</taxon>
        <taxon>Thermotogati</taxon>
        <taxon>Deinococcota</taxon>
        <taxon>Deinococci</taxon>
        <taxon>Thermales</taxon>
        <taxon>Thermaceae</taxon>
        <taxon>Thermus</taxon>
    </lineage>
</organism>
<evidence type="ECO:0000255" key="1">
    <source>
        <dbReference type="HAMAP-Rule" id="MF_01694"/>
    </source>
</evidence>
<evidence type="ECO:0000255" key="2">
    <source>
        <dbReference type="PROSITE-ProRule" id="PRU01266"/>
    </source>
</evidence>
<proteinExistence type="inferred from homology"/>
<accession>Q5SKN6</accession>
<reference key="1">
    <citation type="submission" date="2004-11" db="EMBL/GenBank/DDBJ databases">
        <title>Complete genome sequence of Thermus thermophilus HB8.</title>
        <authorList>
            <person name="Masui R."/>
            <person name="Kurokawa K."/>
            <person name="Nakagawa N."/>
            <person name="Tokunaga F."/>
            <person name="Koyama Y."/>
            <person name="Shibata T."/>
            <person name="Oshima T."/>
            <person name="Yokoyama S."/>
            <person name="Yasunaga T."/>
            <person name="Kuramitsu S."/>
        </authorList>
    </citation>
    <scope>NUCLEOTIDE SEQUENCE [LARGE SCALE GENOMIC DNA]</scope>
    <source>
        <strain>ATCC 27634 / DSM 579 / HB8</strain>
    </source>
</reference>
<gene>
    <name evidence="1" type="primary">bioB</name>
    <name type="ordered locus">TTHA0607</name>
</gene>